<organism>
    <name type="scientific">Scenedesmus vacuolatus</name>
    <name type="common">Green alga</name>
    <name type="synonym">Coelastrella vacuolata</name>
    <dbReference type="NCBI Taxonomy" id="77546"/>
    <lineage>
        <taxon>Eukaryota</taxon>
        <taxon>Viridiplantae</taxon>
        <taxon>Chlorophyta</taxon>
        <taxon>core chlorophytes</taxon>
        <taxon>Chlorophyceae</taxon>
        <taxon>CS clade</taxon>
        <taxon>Sphaeropleales</taxon>
        <taxon>Scenedesmaceae</taxon>
        <taxon>Scenedesmus</taxon>
    </lineage>
</organism>
<protein>
    <recommendedName>
        <fullName>NADP-dependent glyceraldehyde-3-phosphate dehydrogenase</fullName>
        <ecNumber>1.2.1.9</ecNumber>
    </recommendedName>
    <alternativeName>
        <fullName>Glyceraldehyde-3-phosphate dehydrogenase [NADP(+)]</fullName>
        <shortName>GAPDHN</shortName>
    </alternativeName>
    <alternativeName>
        <fullName>Non-phosphorylating glyceraldehyde 3-phosphate dehydrogenase</fullName>
    </alternativeName>
    <alternativeName>
        <fullName>Triosephosphate dehydrogenase</fullName>
    </alternativeName>
</protein>
<evidence type="ECO:0000250" key="1"/>
<evidence type="ECO:0000255" key="2">
    <source>
        <dbReference type="PROSITE-ProRule" id="PRU10007"/>
    </source>
</evidence>
<evidence type="ECO:0000255" key="3">
    <source>
        <dbReference type="PROSITE-ProRule" id="PRU10008"/>
    </source>
</evidence>
<evidence type="ECO:0000269" key="4">
    <source>
    </source>
</evidence>
<evidence type="ECO:0000305" key="5"/>
<proteinExistence type="evidence at transcript level"/>
<keyword id="KW-0963">Cytoplasm</keyword>
<keyword id="KW-0521">NADP</keyword>
<keyword id="KW-0560">Oxidoreductase</keyword>
<comment type="function">
    <text>Important as a means of generating NADPH for biosynthetic reactions.</text>
</comment>
<comment type="catalytic activity">
    <reaction>
        <text>D-glyceraldehyde 3-phosphate + NADP(+) + H2O = (2R)-3-phosphoglycerate + NADPH + 2 H(+)</text>
        <dbReference type="Rhea" id="RHEA:14669"/>
        <dbReference type="ChEBI" id="CHEBI:15377"/>
        <dbReference type="ChEBI" id="CHEBI:15378"/>
        <dbReference type="ChEBI" id="CHEBI:57783"/>
        <dbReference type="ChEBI" id="CHEBI:58272"/>
        <dbReference type="ChEBI" id="CHEBI:58349"/>
        <dbReference type="ChEBI" id="CHEBI:59776"/>
        <dbReference type="EC" id="1.2.1.9"/>
    </reaction>
</comment>
<comment type="subcellular location">
    <subcellularLocation>
        <location>Cytoplasm</location>
    </subcellularLocation>
</comment>
<comment type="induction">
    <text evidence="4">Induced by sugar addition.</text>
</comment>
<comment type="miscellaneous">
    <text>Algae contain three forms of GAPDH: two cytosolic forms which participate in glycolysis and one chloroplastic form which participates in photosynthesis. These three forms are encoded by distinct genes.</text>
</comment>
<comment type="similarity">
    <text evidence="5">Belongs to the aldehyde dehydrogenase family.</text>
</comment>
<accession>Q8VXQ7</accession>
<name>GAPN_SCEVA</name>
<gene>
    <name type="primary">GapN</name>
</gene>
<feature type="chain" id="PRO_0000291764" description="NADP-dependent glyceraldehyde-3-phosphate dehydrogenase">
    <location>
        <begin position="1" status="less than"/>
        <end position="233" status="greater than"/>
    </location>
</feature>
<feature type="active site" description="Proton acceptor" evidence="2 3">
    <location>
        <position position="102"/>
    </location>
</feature>
<feature type="active site" description="Nucleophile" evidence="2 3">
    <location>
        <position position="136"/>
    </location>
</feature>
<feature type="binding site" evidence="1">
    <location>
        <begin position="7"/>
        <end position="8"/>
    </location>
    <ligand>
        <name>substrate</name>
    </ligand>
</feature>
<feature type="binding site" evidence="1">
    <location>
        <position position="30"/>
    </location>
    <ligand>
        <name>NADP(+)</name>
        <dbReference type="ChEBI" id="CHEBI:58349"/>
    </ligand>
</feature>
<feature type="binding site" evidence="1">
    <location>
        <position position="33"/>
    </location>
    <ligand>
        <name>NADP(+)</name>
        <dbReference type="ChEBI" id="CHEBI:58349"/>
    </ligand>
</feature>
<feature type="binding site" evidence="1">
    <location>
        <begin position="83"/>
        <end position="87"/>
    </location>
    <ligand>
        <name>NAD(+)</name>
        <dbReference type="ChEBI" id="CHEBI:57540"/>
    </ligand>
</feature>
<feature type="binding site" evidence="1">
    <location>
        <begin position="135"/>
        <end position="137"/>
    </location>
    <ligand>
        <name>substrate</name>
    </ligand>
</feature>
<feature type="binding site">
    <location>
        <position position="180"/>
    </location>
    <ligand>
        <name>NADP(+)</name>
        <dbReference type="ChEBI" id="CHEBI:58349"/>
    </ligand>
</feature>
<feature type="binding site" evidence="1">
    <location>
        <position position="229"/>
    </location>
    <ligand>
        <name>NADP(+)</name>
        <dbReference type="ChEBI" id="CHEBI:58349"/>
    </ligand>
</feature>
<feature type="site" description="Transition state stabilizer" evidence="1">
    <location>
        <position position="7"/>
    </location>
</feature>
<feature type="non-terminal residue">
    <location>
        <position position="1"/>
    </location>
</feature>
<feature type="non-terminal residue">
    <location>
        <position position="233"/>
    </location>
</feature>
<reference key="1">
    <citation type="journal article" date="2005" name="Planta">
        <title>Sugar-mediated transcriptional regulation of the Gap gene system and concerted photosystem II functional modulation in the microalga Scenedesmus vacuolatus.</title>
        <authorList>
            <person name="Valverde F."/>
            <person name="Ortega J.M."/>
            <person name="Losada M."/>
            <person name="Serrano A."/>
        </authorList>
    </citation>
    <scope>NUCLEOTIDE SEQUENCE [MRNA]</scope>
    <scope>INDUCTION</scope>
    <source>
        <strain>SAG 211-8b</strain>
    </source>
</reference>
<sequence>LAIPPFNYPVNLAVSKLAPALMAGNTVVLKPPSQGVVAGIHMIKCFQAAGLPAGTVNLVTGKGSEIGDFLTTHPAVNCISFTGGDTGIAISRKAGMVPLQMELGGKDACIVCSDADLDLAATHIIKGGFSYSGQRCTAVKVVLVMQDIADELVRKVHAGVQKLKVGRPEDNADITAVVSEGSANFIQGLVEDAKAKGATFLTDWKREGNLLWPVLLDNVTADMRIAWEEPFGP</sequence>
<dbReference type="EC" id="1.2.1.9"/>
<dbReference type="EMBL" id="AJ252211">
    <property type="protein sequence ID" value="CAC81014.1"/>
    <property type="molecule type" value="mRNA"/>
</dbReference>
<dbReference type="SMR" id="Q8VXQ7"/>
<dbReference type="GO" id="GO:0005737">
    <property type="term" value="C:cytoplasm"/>
    <property type="evidence" value="ECO:0007669"/>
    <property type="project" value="UniProtKB-SubCell"/>
</dbReference>
<dbReference type="GO" id="GO:0008886">
    <property type="term" value="F:glyceraldehyde-3-phosphate dehydrogenase (NADP+) (non-phosphorylating) activity"/>
    <property type="evidence" value="ECO:0007669"/>
    <property type="project" value="UniProtKB-EC"/>
</dbReference>
<dbReference type="GO" id="GO:0008911">
    <property type="term" value="F:lactaldehyde dehydrogenase (NAD+) activity"/>
    <property type="evidence" value="ECO:0007669"/>
    <property type="project" value="TreeGrafter"/>
</dbReference>
<dbReference type="Gene3D" id="3.40.605.10">
    <property type="entry name" value="Aldehyde Dehydrogenase, Chain A, domain 1"/>
    <property type="match status" value="1"/>
</dbReference>
<dbReference type="Gene3D" id="3.40.309.10">
    <property type="entry name" value="Aldehyde Dehydrogenase, Chain A, domain 2"/>
    <property type="match status" value="1"/>
</dbReference>
<dbReference type="InterPro" id="IPR016161">
    <property type="entry name" value="Ald_DH/histidinol_DH"/>
</dbReference>
<dbReference type="InterPro" id="IPR016163">
    <property type="entry name" value="Ald_DH_C"/>
</dbReference>
<dbReference type="InterPro" id="IPR016160">
    <property type="entry name" value="Ald_DH_CS_CYS"/>
</dbReference>
<dbReference type="InterPro" id="IPR029510">
    <property type="entry name" value="Ald_DH_CS_GLU"/>
</dbReference>
<dbReference type="InterPro" id="IPR016162">
    <property type="entry name" value="Ald_DH_N"/>
</dbReference>
<dbReference type="InterPro" id="IPR015590">
    <property type="entry name" value="Aldehyde_DH_dom"/>
</dbReference>
<dbReference type="InterPro" id="IPR051020">
    <property type="entry name" value="ALDH-related_metabolic_enz"/>
</dbReference>
<dbReference type="PANTHER" id="PTHR42991">
    <property type="entry name" value="ALDEHYDE DEHYDROGENASE"/>
    <property type="match status" value="1"/>
</dbReference>
<dbReference type="PANTHER" id="PTHR42991:SF1">
    <property type="entry name" value="ALDEHYDE DEHYDROGENASE"/>
    <property type="match status" value="1"/>
</dbReference>
<dbReference type="Pfam" id="PF00171">
    <property type="entry name" value="Aldedh"/>
    <property type="match status" value="1"/>
</dbReference>
<dbReference type="SUPFAM" id="SSF53720">
    <property type="entry name" value="ALDH-like"/>
    <property type="match status" value="1"/>
</dbReference>
<dbReference type="PROSITE" id="PS00070">
    <property type="entry name" value="ALDEHYDE_DEHYDR_CYS"/>
    <property type="match status" value="1"/>
</dbReference>
<dbReference type="PROSITE" id="PS00687">
    <property type="entry name" value="ALDEHYDE_DEHYDR_GLU"/>
    <property type="match status" value="1"/>
</dbReference>